<dbReference type="EC" id="2.3.1.275" evidence="1"/>
<dbReference type="EMBL" id="CP001033">
    <property type="protein sequence ID" value="ACB90047.1"/>
    <property type="molecule type" value="Genomic_DNA"/>
</dbReference>
<dbReference type="RefSeq" id="WP_000628787.1">
    <property type="nucleotide sequence ID" value="NC_010582.1"/>
</dbReference>
<dbReference type="SMR" id="B2INX0"/>
<dbReference type="KEGG" id="spw:SPCG_0795"/>
<dbReference type="HOGENOM" id="CLU_081254_4_0_9"/>
<dbReference type="UniPathway" id="UPA00085"/>
<dbReference type="GO" id="GO:0005886">
    <property type="term" value="C:plasma membrane"/>
    <property type="evidence" value="ECO:0007669"/>
    <property type="project" value="UniProtKB-SubCell"/>
</dbReference>
<dbReference type="GO" id="GO:0043772">
    <property type="term" value="F:acyl-phosphate glycerol-3-phosphate acyltransferase activity"/>
    <property type="evidence" value="ECO:0007669"/>
    <property type="project" value="UniProtKB-UniRule"/>
</dbReference>
<dbReference type="GO" id="GO:0008654">
    <property type="term" value="P:phospholipid biosynthetic process"/>
    <property type="evidence" value="ECO:0007669"/>
    <property type="project" value="UniProtKB-UniRule"/>
</dbReference>
<dbReference type="HAMAP" id="MF_01043">
    <property type="entry name" value="PlsY"/>
    <property type="match status" value="1"/>
</dbReference>
<dbReference type="InterPro" id="IPR003811">
    <property type="entry name" value="G3P_acylTferase_PlsY"/>
</dbReference>
<dbReference type="NCBIfam" id="TIGR00023">
    <property type="entry name" value="glycerol-3-phosphate 1-O-acyltransferase PlsY"/>
    <property type="match status" value="1"/>
</dbReference>
<dbReference type="PANTHER" id="PTHR30309:SF0">
    <property type="entry name" value="GLYCEROL-3-PHOSPHATE ACYLTRANSFERASE-RELATED"/>
    <property type="match status" value="1"/>
</dbReference>
<dbReference type="PANTHER" id="PTHR30309">
    <property type="entry name" value="INNER MEMBRANE PROTEIN YGIH"/>
    <property type="match status" value="1"/>
</dbReference>
<dbReference type="Pfam" id="PF02660">
    <property type="entry name" value="G3P_acyltransf"/>
    <property type="match status" value="1"/>
</dbReference>
<dbReference type="SMART" id="SM01207">
    <property type="entry name" value="G3P_acyltransf"/>
    <property type="match status" value="1"/>
</dbReference>
<gene>
    <name evidence="1" type="primary">plsY</name>
    <name type="ordered locus">SPCG_0795</name>
</gene>
<comment type="function">
    <text evidence="1">Catalyzes the transfer of an acyl group from acyl-phosphate (acyl-PO(4)) to glycerol-3-phosphate (G3P) to form lysophosphatidic acid (LPA). This enzyme utilizes acyl-phosphate as fatty acyl donor, but not acyl-CoA or acyl-ACP.</text>
</comment>
<comment type="catalytic activity">
    <reaction evidence="1">
        <text>an acyl phosphate + sn-glycerol 3-phosphate = a 1-acyl-sn-glycero-3-phosphate + phosphate</text>
        <dbReference type="Rhea" id="RHEA:34075"/>
        <dbReference type="ChEBI" id="CHEBI:43474"/>
        <dbReference type="ChEBI" id="CHEBI:57597"/>
        <dbReference type="ChEBI" id="CHEBI:57970"/>
        <dbReference type="ChEBI" id="CHEBI:59918"/>
        <dbReference type="EC" id="2.3.1.275"/>
    </reaction>
</comment>
<comment type="pathway">
    <text evidence="1">Lipid metabolism; phospholipid metabolism.</text>
</comment>
<comment type="subunit">
    <text evidence="1">Probably interacts with PlsX.</text>
</comment>
<comment type="subcellular location">
    <subcellularLocation>
        <location evidence="1">Cell membrane</location>
        <topology evidence="1">Multi-pass membrane protein</topology>
    </subcellularLocation>
</comment>
<comment type="similarity">
    <text evidence="1">Belongs to the PlsY family.</text>
</comment>
<accession>B2INX0</accession>
<reference key="1">
    <citation type="journal article" date="2009" name="BMC Genomics">
        <title>Genome evolution driven by host adaptations results in a more virulent and antimicrobial-resistant Streptococcus pneumoniae serotype 14.</title>
        <authorList>
            <person name="Ding F."/>
            <person name="Tang P."/>
            <person name="Hsu M.-H."/>
            <person name="Cui P."/>
            <person name="Hu S."/>
            <person name="Yu J."/>
            <person name="Chiu C.-H."/>
        </authorList>
    </citation>
    <scope>NUCLEOTIDE SEQUENCE [LARGE SCALE GENOMIC DNA]</scope>
    <source>
        <strain>CGSP14</strain>
    </source>
</reference>
<name>PLSY_STRPS</name>
<keyword id="KW-1003">Cell membrane</keyword>
<keyword id="KW-0444">Lipid biosynthesis</keyword>
<keyword id="KW-0443">Lipid metabolism</keyword>
<keyword id="KW-0472">Membrane</keyword>
<keyword id="KW-0594">Phospholipid biosynthesis</keyword>
<keyword id="KW-1208">Phospholipid metabolism</keyword>
<keyword id="KW-0808">Transferase</keyword>
<keyword id="KW-0812">Transmembrane</keyword>
<keyword id="KW-1133">Transmembrane helix</keyword>
<feature type="chain" id="PRO_1000136127" description="Glycerol-3-phosphate acyltransferase">
    <location>
        <begin position="1"/>
        <end position="213"/>
    </location>
</feature>
<feature type="transmembrane region" description="Helical" evidence="1">
    <location>
        <begin position="2"/>
        <end position="22"/>
    </location>
</feature>
<feature type="transmembrane region" description="Helical" evidence="1">
    <location>
        <begin position="52"/>
        <end position="74"/>
    </location>
</feature>
<feature type="transmembrane region" description="Helical" evidence="1">
    <location>
        <begin position="81"/>
        <end position="100"/>
    </location>
</feature>
<feature type="transmembrane region" description="Helical" evidence="1">
    <location>
        <begin position="112"/>
        <end position="132"/>
    </location>
</feature>
<feature type="transmembrane region" description="Helical" evidence="1">
    <location>
        <begin position="143"/>
        <end position="163"/>
    </location>
</feature>
<feature type="transmembrane region" description="Helical" evidence="1">
    <location>
        <begin position="164"/>
        <end position="184"/>
    </location>
</feature>
<proteinExistence type="inferred from homology"/>
<evidence type="ECO:0000255" key="1">
    <source>
        <dbReference type="HAMAP-Rule" id="MF_01043"/>
    </source>
</evidence>
<sequence length="213" mass="22989">MITIVLLILAYLLGSIPSGLWIGQVFFQINLREHGSGNTGTTNTFRILGKKAGMATFVIDFFKGTLATLLPIIFHLQGVSPLIFGLLAVIGHTFPIFAGFKGGKAVATSAGVIFGFAPIFCLYLAIIFFGALYLGSMISLSSVTASIAAVIGVLLFPLFGFILSNYDFLFIAIILALASLIIIRHKDNIARIKNKTENLVPWGLNLTHQDPKK</sequence>
<organism>
    <name type="scientific">Streptococcus pneumoniae (strain CGSP14)</name>
    <dbReference type="NCBI Taxonomy" id="516950"/>
    <lineage>
        <taxon>Bacteria</taxon>
        <taxon>Bacillati</taxon>
        <taxon>Bacillota</taxon>
        <taxon>Bacilli</taxon>
        <taxon>Lactobacillales</taxon>
        <taxon>Streptococcaceae</taxon>
        <taxon>Streptococcus</taxon>
    </lineage>
</organism>
<protein>
    <recommendedName>
        <fullName evidence="1">Glycerol-3-phosphate acyltransferase</fullName>
    </recommendedName>
    <alternativeName>
        <fullName evidence="1">Acyl-PO4 G3P acyltransferase</fullName>
    </alternativeName>
    <alternativeName>
        <fullName evidence="1">Acyl-phosphate--glycerol-3-phosphate acyltransferase</fullName>
    </alternativeName>
    <alternativeName>
        <fullName evidence="1">G3P acyltransferase</fullName>
        <shortName evidence="1">GPAT</shortName>
        <ecNumber evidence="1">2.3.1.275</ecNumber>
    </alternativeName>
    <alternativeName>
        <fullName evidence="1">Lysophosphatidic acid synthase</fullName>
        <shortName evidence="1">LPA synthase</shortName>
    </alternativeName>
</protein>